<name>Y004_NPVOP</name>
<keyword id="KW-1185">Reference proteome</keyword>
<organismHost>
    <name type="scientific">Orgyia pseudotsugata</name>
    <name type="common">Douglas-fir tussock moth</name>
    <dbReference type="NCBI Taxonomy" id="33414"/>
</organismHost>
<organism>
    <name type="scientific">Orgyia pseudotsugata multicapsid polyhedrosis virus</name>
    <name type="common">OpMNPV</name>
    <dbReference type="NCBI Taxonomy" id="262177"/>
    <lineage>
        <taxon>Viruses</taxon>
        <taxon>Viruses incertae sedis</taxon>
        <taxon>Naldaviricetes</taxon>
        <taxon>Lefavirales</taxon>
        <taxon>Baculoviridae</taxon>
        <taxon>Alphabaculovirus</taxon>
        <taxon>Alphabaculovirus orpseudotsugatae</taxon>
    </lineage>
</organism>
<gene>
    <name type="ORF">ORF8</name>
</gene>
<feature type="chain" id="PRO_0000132943" description="Uncharacterized 16.2 kDa protein">
    <location>
        <begin position="1"/>
        <end position="146"/>
    </location>
</feature>
<proteinExistence type="predicted"/>
<reference key="1">
    <citation type="journal article" date="1995" name="Virology">
        <title>Replication of Orgyia pseudotsugata baculovirus DNA: lef-2 and ie-1 are essential and ie-2, p34, and Op-iap are stimulatory genes.</title>
        <authorList>
            <person name="Ahrens C.H."/>
            <person name="Rohrmann G.F."/>
        </authorList>
    </citation>
    <scope>NUCLEOTIDE SEQUENCE [GENOMIC DNA]</scope>
</reference>
<reference key="2">
    <citation type="journal article" date="1997" name="Virology">
        <title>The sequence of the Orgyia pseudotsugata multinucleocapsid nuclear polyhedrosis virus genome.</title>
        <authorList>
            <person name="Ahrens C.H."/>
            <person name="Russell R.R."/>
            <person name="Funk C.J."/>
            <person name="Evans J."/>
            <person name="Harwood S."/>
            <person name="Rohrmann G.F."/>
        </authorList>
    </citation>
    <scope>NUCLEOTIDE SEQUENCE [LARGE SCALE GENOMIC DNA]</scope>
</reference>
<accession>Q65372</accession>
<accession>O12549</accession>
<accession>O12838</accession>
<protein>
    <recommendedName>
        <fullName>Uncharacterized 16.2 kDa protein</fullName>
    </recommendedName>
    <alternativeName>
        <fullName>ORF8</fullName>
    </alternativeName>
</protein>
<dbReference type="EMBL" id="D50053">
    <property type="protein sequence ID" value="BAA08772.1"/>
    <property type="molecule type" value="Genomic_DNA"/>
</dbReference>
<dbReference type="EMBL" id="U75930">
    <property type="protein sequence ID" value="AAC59007.1"/>
    <property type="molecule type" value="Genomic_DNA"/>
</dbReference>
<dbReference type="RefSeq" id="NP_046164.1">
    <property type="nucleotide sequence ID" value="NC_001875.2"/>
</dbReference>
<dbReference type="KEGG" id="vg:912075"/>
<dbReference type="OrthoDB" id="14341at10239"/>
<dbReference type="Proteomes" id="UP000009248">
    <property type="component" value="Genome"/>
</dbReference>
<dbReference type="InterPro" id="IPR003225">
    <property type="entry name" value="DUF325"/>
</dbReference>
<dbReference type="Pfam" id="PF03804">
    <property type="entry name" value="DUF325"/>
    <property type="match status" value="1"/>
</dbReference>
<sequence length="146" mass="16179">MPGARFVRFSLRLTQEFKENVVAHVDHLMGLRALIDGKVTSADVRRFGFLSRNVLVSACMAVNVQVYAPDATIDMRHQPTIYFRVCQNCHAMADVPAPDDHSIARYLLAECGAVLVIDHPLDVFGETEEGVNELLEVQRINAGGDL</sequence>